<feature type="chain" id="PRO_1000188510" description="HMP-PP phosphatase">
    <location>
        <begin position="1"/>
        <end position="272"/>
    </location>
</feature>
<feature type="active site" description="Nucleophile" evidence="1">
    <location>
        <position position="8"/>
    </location>
</feature>
<feature type="binding site" evidence="1">
    <location>
        <position position="8"/>
    </location>
    <ligand>
        <name>Mg(2+)</name>
        <dbReference type="ChEBI" id="CHEBI:18420"/>
    </ligand>
</feature>
<feature type="binding site" evidence="1">
    <location>
        <position position="10"/>
    </location>
    <ligand>
        <name>Mg(2+)</name>
        <dbReference type="ChEBI" id="CHEBI:18420"/>
    </ligand>
</feature>
<feature type="binding site" evidence="1">
    <location>
        <position position="212"/>
    </location>
    <ligand>
        <name>Mg(2+)</name>
        <dbReference type="ChEBI" id="CHEBI:18420"/>
    </ligand>
</feature>
<sequence>MARLAAFDMDGTLLMPDHHLGRETIATLARLRERDITLTFATGRHVLEMRHILGTLSLDAYLITGNGTRIHSLEGDVLHRQDLDPQVADTVMHHAWDTRASMHVFNDNGWFTGQEIPALLQAHVYSGFRYQVIDIKSIPAHQVTKICFCGDHDDLIRLRIQLNEALEERAHLCFSAVDCLEVLPLGCNKGSALAVLSNHLGLSLADCMAFGDAMNDREMLGSVGRGLIMGNAMPQLIAALPHLSVIGHCGNQAVSHFLTHWLDNPHLPYSPE</sequence>
<accession>B4T9F2</accession>
<name>COF_SALHS</name>
<dbReference type="EC" id="3.6.1.-" evidence="1"/>
<dbReference type="EMBL" id="CP001120">
    <property type="protein sequence ID" value="ACF69491.1"/>
    <property type="molecule type" value="Genomic_DNA"/>
</dbReference>
<dbReference type="RefSeq" id="WP_000113030.1">
    <property type="nucleotide sequence ID" value="NC_011083.1"/>
</dbReference>
<dbReference type="SMR" id="B4T9F2"/>
<dbReference type="KEGG" id="seh:SeHA_C0560"/>
<dbReference type="HOGENOM" id="CLU_044146_5_2_6"/>
<dbReference type="Proteomes" id="UP000001866">
    <property type="component" value="Chromosome"/>
</dbReference>
<dbReference type="GO" id="GO:0002145">
    <property type="term" value="F:4-amino-5-hydroxymethyl-2-methylpyrimidine diphosphatase activity"/>
    <property type="evidence" value="ECO:0007669"/>
    <property type="project" value="RHEA"/>
</dbReference>
<dbReference type="GO" id="GO:0000287">
    <property type="term" value="F:magnesium ion binding"/>
    <property type="evidence" value="ECO:0000250"/>
    <property type="project" value="UniProtKB"/>
</dbReference>
<dbReference type="GO" id="GO:0016791">
    <property type="term" value="F:phosphatase activity"/>
    <property type="evidence" value="ECO:0000250"/>
    <property type="project" value="UniProtKB"/>
</dbReference>
<dbReference type="CDD" id="cd07516">
    <property type="entry name" value="HAD_Pase"/>
    <property type="match status" value="1"/>
</dbReference>
<dbReference type="FunFam" id="3.30.1240.10:FF:000002">
    <property type="entry name" value="HMP-PP phosphatase"/>
    <property type="match status" value="1"/>
</dbReference>
<dbReference type="Gene3D" id="3.30.1240.10">
    <property type="match status" value="1"/>
</dbReference>
<dbReference type="Gene3D" id="3.40.50.1000">
    <property type="entry name" value="HAD superfamily/HAD-like"/>
    <property type="match status" value="1"/>
</dbReference>
<dbReference type="HAMAP" id="MF_01847">
    <property type="entry name" value="HMP_PP_phosphat"/>
    <property type="match status" value="1"/>
</dbReference>
<dbReference type="InterPro" id="IPR000150">
    <property type="entry name" value="Cof"/>
</dbReference>
<dbReference type="InterPro" id="IPR036412">
    <property type="entry name" value="HAD-like_sf"/>
</dbReference>
<dbReference type="InterPro" id="IPR006379">
    <property type="entry name" value="HAD-SF_hydro_IIB"/>
</dbReference>
<dbReference type="InterPro" id="IPR023214">
    <property type="entry name" value="HAD_sf"/>
</dbReference>
<dbReference type="InterPro" id="IPR023938">
    <property type="entry name" value="HMP-PP_phosphatase"/>
</dbReference>
<dbReference type="NCBIfam" id="TIGR00099">
    <property type="entry name" value="Cof-subfamily"/>
    <property type="match status" value="1"/>
</dbReference>
<dbReference type="NCBIfam" id="TIGR01484">
    <property type="entry name" value="HAD-SF-IIB"/>
    <property type="match status" value="1"/>
</dbReference>
<dbReference type="NCBIfam" id="NF011705">
    <property type="entry name" value="PRK15126.1"/>
    <property type="match status" value="1"/>
</dbReference>
<dbReference type="PANTHER" id="PTHR47267">
    <property type="match status" value="1"/>
</dbReference>
<dbReference type="PANTHER" id="PTHR47267:SF2">
    <property type="entry name" value="HMP-PP PHOSPHATASE"/>
    <property type="match status" value="1"/>
</dbReference>
<dbReference type="Pfam" id="PF08282">
    <property type="entry name" value="Hydrolase_3"/>
    <property type="match status" value="1"/>
</dbReference>
<dbReference type="SFLD" id="SFLDG01140">
    <property type="entry name" value="C2.B:_Phosphomannomutase_and_P"/>
    <property type="match status" value="1"/>
</dbReference>
<dbReference type="SFLD" id="SFLDS00003">
    <property type="entry name" value="Haloacid_Dehalogenase"/>
    <property type="match status" value="1"/>
</dbReference>
<dbReference type="SUPFAM" id="SSF56784">
    <property type="entry name" value="HAD-like"/>
    <property type="match status" value="1"/>
</dbReference>
<dbReference type="PROSITE" id="PS01228">
    <property type="entry name" value="COF_1"/>
    <property type="match status" value="1"/>
</dbReference>
<dbReference type="PROSITE" id="PS01229">
    <property type="entry name" value="COF_2"/>
    <property type="match status" value="1"/>
</dbReference>
<evidence type="ECO:0000255" key="1">
    <source>
        <dbReference type="HAMAP-Rule" id="MF_01847"/>
    </source>
</evidence>
<keyword id="KW-0378">Hydrolase</keyword>
<keyword id="KW-0460">Magnesium</keyword>
<keyword id="KW-0479">Metal-binding</keyword>
<gene>
    <name evidence="1" type="primary">cof</name>
    <name type="ordered locus">SeHA_C0560</name>
</gene>
<comment type="function">
    <text evidence="1">Catalyzes the hydrolysis of 4-amino-2-methyl-5-hydroxymethylpyrimidine pyrophosphate (HMP-PP) to 4-amino-2-methyl-5-hydroxymethylpyrimidine phosphate (HMP-P).</text>
</comment>
<comment type="catalytic activity">
    <reaction evidence="1">
        <text>4-amino-2-methyl-5-(diphosphooxymethyl)pyrimidine + H2O = 4-amino-2-methyl-5-(phosphooxymethyl)pyrimidine + phosphate + H(+)</text>
        <dbReference type="Rhea" id="RHEA:27914"/>
        <dbReference type="ChEBI" id="CHEBI:15377"/>
        <dbReference type="ChEBI" id="CHEBI:15378"/>
        <dbReference type="ChEBI" id="CHEBI:43474"/>
        <dbReference type="ChEBI" id="CHEBI:57841"/>
        <dbReference type="ChEBI" id="CHEBI:58354"/>
    </reaction>
</comment>
<comment type="cofactor">
    <cofactor evidence="1">
        <name>Mg(2+)</name>
        <dbReference type="ChEBI" id="CHEBI:18420"/>
    </cofactor>
</comment>
<comment type="similarity">
    <text evidence="1">Belongs to the HAD-like hydrolase superfamily. Cof family.</text>
</comment>
<reference key="1">
    <citation type="journal article" date="2011" name="J. Bacteriol.">
        <title>Comparative genomics of 28 Salmonella enterica isolates: evidence for CRISPR-mediated adaptive sublineage evolution.</title>
        <authorList>
            <person name="Fricke W.F."/>
            <person name="Mammel M.K."/>
            <person name="McDermott P.F."/>
            <person name="Tartera C."/>
            <person name="White D.G."/>
            <person name="Leclerc J.E."/>
            <person name="Ravel J."/>
            <person name="Cebula T.A."/>
        </authorList>
    </citation>
    <scope>NUCLEOTIDE SEQUENCE [LARGE SCALE GENOMIC DNA]</scope>
    <source>
        <strain>SL476</strain>
    </source>
</reference>
<protein>
    <recommendedName>
        <fullName evidence="1">HMP-PP phosphatase</fullName>
        <ecNumber evidence="1">3.6.1.-</ecNumber>
    </recommendedName>
</protein>
<proteinExistence type="inferred from homology"/>
<organism>
    <name type="scientific">Salmonella heidelberg (strain SL476)</name>
    <dbReference type="NCBI Taxonomy" id="454169"/>
    <lineage>
        <taxon>Bacteria</taxon>
        <taxon>Pseudomonadati</taxon>
        <taxon>Pseudomonadota</taxon>
        <taxon>Gammaproteobacteria</taxon>
        <taxon>Enterobacterales</taxon>
        <taxon>Enterobacteriaceae</taxon>
        <taxon>Salmonella</taxon>
    </lineage>
</organism>